<comment type="function">
    <text evidence="2">Has a stimulatory effect on the ATPase activity of HSP70 in a dose-dependent and time-dependent manner and hence acts as a co-chaperone of HSP70. Plays an indispensable role in the organization of KRT8/KRT18 filaments. Acts as an endogenous molecular chaperone for neuronal proteins including huntingtin. Suppresses aggregation and toxicity of polyglutamine-containing, aggregation-prone proteins. Also reduces cellular toxicity and caspase-3 activity.</text>
</comment>
<comment type="subunit">
    <text evidence="1 2">Homooligomer. Interacts with BAG3, HSPB8 and STUB1 (By similarity). Interacts with ALKBH1 (By similarity). Interacts with HSP70, KRT18 and PTTG (By similarity).</text>
</comment>
<comment type="subcellular location">
    <subcellularLocation>
        <location evidence="2">Cytoplasm</location>
        <location evidence="2">Perinuclear region</location>
    </subcellularLocation>
    <subcellularLocation>
        <location evidence="2">Nucleus</location>
    </subcellularLocation>
    <subcellularLocation>
        <location evidence="2">Cytoplasm</location>
        <location evidence="2">Myofibril</location>
        <location evidence="2">Sarcomere</location>
        <location evidence="2">Z line</location>
    </subcellularLocation>
</comment>
<gene>
    <name type="primary">DNAJB6</name>
</gene>
<organism>
    <name type="scientific">Pongo abelii</name>
    <name type="common">Sumatran orangutan</name>
    <name type="synonym">Pongo pygmaeus abelii</name>
    <dbReference type="NCBI Taxonomy" id="9601"/>
    <lineage>
        <taxon>Eukaryota</taxon>
        <taxon>Metazoa</taxon>
        <taxon>Chordata</taxon>
        <taxon>Craniata</taxon>
        <taxon>Vertebrata</taxon>
        <taxon>Euteleostomi</taxon>
        <taxon>Mammalia</taxon>
        <taxon>Eutheria</taxon>
        <taxon>Euarchontoglires</taxon>
        <taxon>Primates</taxon>
        <taxon>Haplorrhini</taxon>
        <taxon>Catarrhini</taxon>
        <taxon>Hominidae</taxon>
        <taxon>Pongo</taxon>
    </lineage>
</organism>
<proteinExistence type="evidence at transcript level"/>
<accession>Q5R8H0</accession>
<dbReference type="EMBL" id="CR859782">
    <property type="protein sequence ID" value="CAH91940.1"/>
    <property type="molecule type" value="mRNA"/>
</dbReference>
<dbReference type="RefSeq" id="NP_001127484.1">
    <property type="nucleotide sequence ID" value="NM_001134012.1"/>
</dbReference>
<dbReference type="SMR" id="Q5R8H0"/>
<dbReference type="FunCoup" id="Q5R8H0">
    <property type="interactions" value="3093"/>
</dbReference>
<dbReference type="STRING" id="9601.ENSPPYP00000020432"/>
<dbReference type="GeneID" id="100174558"/>
<dbReference type="KEGG" id="pon:100174558"/>
<dbReference type="CTD" id="10049"/>
<dbReference type="eggNOG" id="KOG0714">
    <property type="taxonomic scope" value="Eukaryota"/>
</dbReference>
<dbReference type="InParanoid" id="Q5R8H0"/>
<dbReference type="OrthoDB" id="9539442at2759"/>
<dbReference type="Proteomes" id="UP000001595">
    <property type="component" value="Unplaced"/>
</dbReference>
<dbReference type="GO" id="GO:0005634">
    <property type="term" value="C:nucleus"/>
    <property type="evidence" value="ECO:0007669"/>
    <property type="project" value="UniProtKB-SubCell"/>
</dbReference>
<dbReference type="GO" id="GO:0048471">
    <property type="term" value="C:perinuclear region of cytoplasm"/>
    <property type="evidence" value="ECO:0007669"/>
    <property type="project" value="UniProtKB-SubCell"/>
</dbReference>
<dbReference type="GO" id="GO:0030018">
    <property type="term" value="C:Z disc"/>
    <property type="evidence" value="ECO:0000250"/>
    <property type="project" value="UniProtKB"/>
</dbReference>
<dbReference type="GO" id="GO:0030544">
    <property type="term" value="F:Hsp70 protein binding"/>
    <property type="evidence" value="ECO:0007669"/>
    <property type="project" value="InterPro"/>
</dbReference>
<dbReference type="GO" id="GO:0051082">
    <property type="term" value="F:unfolded protein binding"/>
    <property type="evidence" value="ECO:0007669"/>
    <property type="project" value="InterPro"/>
</dbReference>
<dbReference type="GO" id="GO:0061077">
    <property type="term" value="P:chaperone-mediated protein folding"/>
    <property type="evidence" value="ECO:0007669"/>
    <property type="project" value="InterPro"/>
</dbReference>
<dbReference type="CDD" id="cd06257">
    <property type="entry name" value="DnaJ"/>
    <property type="match status" value="1"/>
</dbReference>
<dbReference type="FunFam" id="1.10.287.110:FF:000022">
    <property type="entry name" value="DnaJ homolog subfamily B member 6"/>
    <property type="match status" value="1"/>
</dbReference>
<dbReference type="Gene3D" id="1.10.287.110">
    <property type="entry name" value="DnaJ domain"/>
    <property type="match status" value="1"/>
</dbReference>
<dbReference type="InterPro" id="IPR001623">
    <property type="entry name" value="DnaJ_domain"/>
</dbReference>
<dbReference type="InterPro" id="IPR018253">
    <property type="entry name" value="DnaJ_domain_CS"/>
</dbReference>
<dbReference type="InterPro" id="IPR043183">
    <property type="entry name" value="DNJB2/6-like"/>
</dbReference>
<dbReference type="InterPro" id="IPR036869">
    <property type="entry name" value="J_dom_sf"/>
</dbReference>
<dbReference type="PANTHER" id="PTHR45168">
    <property type="entry name" value="DNAJ HOMOLOG SUBFAMILY B MEMBER 2"/>
    <property type="match status" value="1"/>
</dbReference>
<dbReference type="PANTHER" id="PTHR45168:SF4">
    <property type="entry name" value="SIMILAR TO DNAJ HOMOLOG SUBFAMILY B MEMBER 6 (HEAT SHOCK PROTEIN J2) (HSJ-2) (MRJ) (MDJ4)"/>
    <property type="match status" value="1"/>
</dbReference>
<dbReference type="Pfam" id="PF00226">
    <property type="entry name" value="DnaJ"/>
    <property type="match status" value="1"/>
</dbReference>
<dbReference type="PRINTS" id="PR00625">
    <property type="entry name" value="JDOMAIN"/>
</dbReference>
<dbReference type="SMART" id="SM00271">
    <property type="entry name" value="DnaJ"/>
    <property type="match status" value="1"/>
</dbReference>
<dbReference type="SUPFAM" id="SSF46565">
    <property type="entry name" value="Chaperone J-domain"/>
    <property type="match status" value="1"/>
</dbReference>
<dbReference type="PROSITE" id="PS00636">
    <property type="entry name" value="DNAJ_1"/>
    <property type="match status" value="1"/>
</dbReference>
<dbReference type="PROSITE" id="PS50076">
    <property type="entry name" value="DNAJ_2"/>
    <property type="match status" value="1"/>
</dbReference>
<reference key="1">
    <citation type="submission" date="2004-11" db="EMBL/GenBank/DDBJ databases">
        <authorList>
            <consortium name="The German cDNA consortium"/>
        </authorList>
    </citation>
    <scope>NUCLEOTIDE SEQUENCE [LARGE SCALE MRNA]</scope>
    <source>
        <tissue>Heart</tissue>
    </source>
</reference>
<sequence length="326" mass="36015">MVDYYEVLGVQRHASPEDIKKAYRKLALKWHPDKNPENKEEAERKFKQVAEAYEVLSDAKKRDIYDKYGKEGLNGGGGGGSHFDSPFEFGFTFRNPDDVFREFFGGRDPFSFDFFEDPFEDFFGNRRGPRGSRSRGTGSFFSAFSGFPSFGSGFSSFDTGFTSFGSLGHGGLTSFSSTSFGGSGMGNFKSISTSTKMVNGRKITTKRIVENGQERVEVGEDGQLKSLTINGVADDDALAEERMRRGQNALPAQPAGLRPPKPPRPASLLRHAPHCLSEEEGEQDRPRAPGPWDPLASAAGLKEGGKRKKQKQREESKKKKSTKGNH</sequence>
<feature type="chain" id="PRO_0000290023" description="DnaJ homolog subfamily B member 6">
    <location>
        <begin position="1"/>
        <end position="326"/>
    </location>
</feature>
<feature type="domain" description="J" evidence="3">
    <location>
        <begin position="2"/>
        <end position="69"/>
    </location>
</feature>
<feature type="region of interest" description="Interaction with HSP70" evidence="2">
    <location>
        <begin position="2"/>
        <end position="146"/>
    </location>
</feature>
<feature type="region of interest" description="Interaction with KRT18" evidence="2">
    <location>
        <begin position="119"/>
        <end position="242"/>
    </location>
</feature>
<feature type="region of interest" description="Disordered" evidence="4">
    <location>
        <begin position="249"/>
        <end position="326"/>
    </location>
</feature>
<feature type="modified residue" description="Omega-N-methylarginine" evidence="1">
    <location>
        <position position="135"/>
    </location>
</feature>
<feature type="modified residue" description="Phosphoserine" evidence="2">
    <location>
        <position position="277"/>
    </location>
</feature>
<name>DNJB6_PONAB</name>
<evidence type="ECO:0000250" key="1">
    <source>
        <dbReference type="UniProtKB" id="O54946"/>
    </source>
</evidence>
<evidence type="ECO:0000250" key="2">
    <source>
        <dbReference type="UniProtKB" id="O75190"/>
    </source>
</evidence>
<evidence type="ECO:0000255" key="3">
    <source>
        <dbReference type="PROSITE-ProRule" id="PRU00286"/>
    </source>
</evidence>
<evidence type="ECO:0000256" key="4">
    <source>
        <dbReference type="SAM" id="MobiDB-lite"/>
    </source>
</evidence>
<protein>
    <recommendedName>
        <fullName>DnaJ homolog subfamily B member 6</fullName>
    </recommendedName>
</protein>
<keyword id="KW-0143">Chaperone</keyword>
<keyword id="KW-0963">Cytoplasm</keyword>
<keyword id="KW-0488">Methylation</keyword>
<keyword id="KW-0539">Nucleus</keyword>
<keyword id="KW-0597">Phosphoprotein</keyword>
<keyword id="KW-1185">Reference proteome</keyword>